<sequence>MGKSTFLQDFKAFAMKGNVVDMAVGVIIGGAFGKIVSSVVADIIMPPLGLLIGGVNFTDLKWVMKAAEYGADGKETAAAVTLNYGNFLQATFDFLIIAFSIFLFIKLITKLTQKKAEAPAAPPAPPAPTKEEILLTEIRDLLKEKQ</sequence>
<organism>
    <name type="scientific">Bacteroides fragilis (strain YCH46)</name>
    <dbReference type="NCBI Taxonomy" id="295405"/>
    <lineage>
        <taxon>Bacteria</taxon>
        <taxon>Pseudomonadati</taxon>
        <taxon>Bacteroidota</taxon>
        <taxon>Bacteroidia</taxon>
        <taxon>Bacteroidales</taxon>
        <taxon>Bacteroidaceae</taxon>
        <taxon>Bacteroides</taxon>
    </lineage>
</organism>
<proteinExistence type="inferred from homology"/>
<feature type="chain" id="PRO_0000237975" description="Large-conductance mechanosensitive channel">
    <location>
        <begin position="1"/>
        <end position="146"/>
    </location>
</feature>
<feature type="transmembrane region" description="Helical" evidence="1">
    <location>
        <begin position="12"/>
        <end position="32"/>
    </location>
</feature>
<feature type="transmembrane region" description="Helical" evidence="1">
    <location>
        <begin position="88"/>
        <end position="108"/>
    </location>
</feature>
<gene>
    <name evidence="1" type="primary">mscL</name>
    <name type="ordered locus">BF0968</name>
</gene>
<name>MSCL_BACFR</name>
<evidence type="ECO:0000255" key="1">
    <source>
        <dbReference type="HAMAP-Rule" id="MF_00115"/>
    </source>
</evidence>
<keyword id="KW-0997">Cell inner membrane</keyword>
<keyword id="KW-1003">Cell membrane</keyword>
<keyword id="KW-0407">Ion channel</keyword>
<keyword id="KW-0406">Ion transport</keyword>
<keyword id="KW-0472">Membrane</keyword>
<keyword id="KW-0812">Transmembrane</keyword>
<keyword id="KW-1133">Transmembrane helix</keyword>
<keyword id="KW-0813">Transport</keyword>
<protein>
    <recommendedName>
        <fullName evidence="1">Large-conductance mechanosensitive channel</fullName>
    </recommendedName>
</protein>
<dbReference type="EMBL" id="AP006841">
    <property type="protein sequence ID" value="BAD47718.1"/>
    <property type="molecule type" value="Genomic_DNA"/>
</dbReference>
<dbReference type="RefSeq" id="WP_005785250.1">
    <property type="nucleotide sequence ID" value="NZ_UYXF01000032.1"/>
</dbReference>
<dbReference type="RefSeq" id="YP_098252.1">
    <property type="nucleotide sequence ID" value="NC_006347.1"/>
</dbReference>
<dbReference type="SMR" id="Q64XQ8"/>
<dbReference type="STRING" id="295405.BF0968"/>
<dbReference type="GeneID" id="60370103"/>
<dbReference type="KEGG" id="bfr:BF0968"/>
<dbReference type="PATRIC" id="fig|295405.11.peg.968"/>
<dbReference type="HOGENOM" id="CLU_095787_0_0_10"/>
<dbReference type="OrthoDB" id="9810350at2"/>
<dbReference type="Proteomes" id="UP000002197">
    <property type="component" value="Chromosome"/>
</dbReference>
<dbReference type="GO" id="GO:0005886">
    <property type="term" value="C:plasma membrane"/>
    <property type="evidence" value="ECO:0007669"/>
    <property type="project" value="UniProtKB-SubCell"/>
</dbReference>
<dbReference type="GO" id="GO:0008381">
    <property type="term" value="F:mechanosensitive monoatomic ion channel activity"/>
    <property type="evidence" value="ECO:0007669"/>
    <property type="project" value="UniProtKB-UniRule"/>
</dbReference>
<dbReference type="FunFam" id="1.10.1200.120:FF:000001">
    <property type="entry name" value="Large-conductance mechanosensitive channel"/>
    <property type="match status" value="1"/>
</dbReference>
<dbReference type="Gene3D" id="1.10.1200.120">
    <property type="entry name" value="Large-conductance mechanosensitive channel, MscL, domain 1"/>
    <property type="match status" value="1"/>
</dbReference>
<dbReference type="HAMAP" id="MF_00115">
    <property type="entry name" value="MscL"/>
    <property type="match status" value="1"/>
</dbReference>
<dbReference type="InterPro" id="IPR019823">
    <property type="entry name" value="Mechanosensitive_channel_CS"/>
</dbReference>
<dbReference type="InterPro" id="IPR001185">
    <property type="entry name" value="MS_channel"/>
</dbReference>
<dbReference type="InterPro" id="IPR037673">
    <property type="entry name" value="MSC/AndL"/>
</dbReference>
<dbReference type="InterPro" id="IPR036019">
    <property type="entry name" value="MscL_channel"/>
</dbReference>
<dbReference type="NCBIfam" id="TIGR00220">
    <property type="entry name" value="mscL"/>
    <property type="match status" value="1"/>
</dbReference>
<dbReference type="NCBIfam" id="NF001843">
    <property type="entry name" value="PRK00567.1-4"/>
    <property type="match status" value="1"/>
</dbReference>
<dbReference type="PANTHER" id="PTHR30266:SF2">
    <property type="entry name" value="LARGE-CONDUCTANCE MECHANOSENSITIVE CHANNEL"/>
    <property type="match status" value="1"/>
</dbReference>
<dbReference type="PANTHER" id="PTHR30266">
    <property type="entry name" value="MECHANOSENSITIVE CHANNEL MSCL"/>
    <property type="match status" value="1"/>
</dbReference>
<dbReference type="Pfam" id="PF01741">
    <property type="entry name" value="MscL"/>
    <property type="match status" value="1"/>
</dbReference>
<dbReference type="PRINTS" id="PR01264">
    <property type="entry name" value="MECHCHANNEL"/>
</dbReference>
<dbReference type="SUPFAM" id="SSF81330">
    <property type="entry name" value="Gated mechanosensitive channel"/>
    <property type="match status" value="1"/>
</dbReference>
<dbReference type="PROSITE" id="PS01327">
    <property type="entry name" value="MSCL"/>
    <property type="match status" value="1"/>
</dbReference>
<reference key="1">
    <citation type="journal article" date="2004" name="Proc. Natl. Acad. Sci. U.S.A.">
        <title>Genomic analysis of Bacteroides fragilis reveals extensive DNA inversions regulating cell surface adaptation.</title>
        <authorList>
            <person name="Kuwahara T."/>
            <person name="Yamashita A."/>
            <person name="Hirakawa H."/>
            <person name="Nakayama H."/>
            <person name="Toh H."/>
            <person name="Okada N."/>
            <person name="Kuhara S."/>
            <person name="Hattori M."/>
            <person name="Hayashi T."/>
            <person name="Ohnishi Y."/>
        </authorList>
    </citation>
    <scope>NUCLEOTIDE SEQUENCE [LARGE SCALE GENOMIC DNA]</scope>
    <source>
        <strain>YCH46</strain>
    </source>
</reference>
<comment type="function">
    <text evidence="1">Channel that opens in response to stretch forces in the membrane lipid bilayer. May participate in the regulation of osmotic pressure changes within the cell.</text>
</comment>
<comment type="subunit">
    <text evidence="1">Homopentamer.</text>
</comment>
<comment type="subcellular location">
    <subcellularLocation>
        <location evidence="1">Cell inner membrane</location>
        <topology evidence="1">Multi-pass membrane protein</topology>
    </subcellularLocation>
</comment>
<comment type="similarity">
    <text evidence="1">Belongs to the MscL family.</text>
</comment>
<accession>Q64XQ8</accession>